<organism>
    <name type="scientific">Salmonella paratyphi C (strain RKS4594)</name>
    <dbReference type="NCBI Taxonomy" id="476213"/>
    <lineage>
        <taxon>Bacteria</taxon>
        <taxon>Pseudomonadati</taxon>
        <taxon>Pseudomonadota</taxon>
        <taxon>Gammaproteobacteria</taxon>
        <taxon>Enterobacterales</taxon>
        <taxon>Enterobacteriaceae</taxon>
        <taxon>Salmonella</taxon>
    </lineage>
</organism>
<comment type="similarity">
    <text evidence="1">Belongs to the UPF0352 family.</text>
</comment>
<name>YEJL_SALPC</name>
<proteinExistence type="inferred from homology"/>
<reference key="1">
    <citation type="journal article" date="2009" name="PLoS ONE">
        <title>Salmonella paratyphi C: genetic divergence from Salmonella choleraesuis and pathogenic convergence with Salmonella typhi.</title>
        <authorList>
            <person name="Liu W.-Q."/>
            <person name="Feng Y."/>
            <person name="Wang Y."/>
            <person name="Zou Q.-H."/>
            <person name="Chen F."/>
            <person name="Guo J.-T."/>
            <person name="Peng Y.-H."/>
            <person name="Jin Y."/>
            <person name="Li Y.-G."/>
            <person name="Hu S.-N."/>
            <person name="Johnston R.N."/>
            <person name="Liu G.-R."/>
            <person name="Liu S.-L."/>
        </authorList>
    </citation>
    <scope>NUCLEOTIDE SEQUENCE [LARGE SCALE GENOMIC DNA]</scope>
    <source>
        <strain>RKS4594</strain>
    </source>
</reference>
<gene>
    <name evidence="1" type="primary">yejL</name>
    <name type="ordered locus">SPC_1473</name>
</gene>
<protein>
    <recommendedName>
        <fullName evidence="1">UPF0352 protein YejL</fullName>
    </recommendedName>
</protein>
<feature type="chain" id="PRO_1000148652" description="UPF0352 protein YejL">
    <location>
        <begin position="1"/>
        <end position="75"/>
    </location>
</feature>
<evidence type="ECO:0000255" key="1">
    <source>
        <dbReference type="HAMAP-Rule" id="MF_00816"/>
    </source>
</evidence>
<dbReference type="EMBL" id="CP000857">
    <property type="protein sequence ID" value="ACN45632.1"/>
    <property type="molecule type" value="Genomic_DNA"/>
</dbReference>
<dbReference type="RefSeq" id="WP_001135904.1">
    <property type="nucleotide sequence ID" value="NC_012125.1"/>
</dbReference>
<dbReference type="SMR" id="C0Q0R3"/>
<dbReference type="KEGG" id="sei:SPC_1473"/>
<dbReference type="HOGENOM" id="CLU_175457_0_0_6"/>
<dbReference type="Proteomes" id="UP000001599">
    <property type="component" value="Chromosome"/>
</dbReference>
<dbReference type="Gene3D" id="1.10.3390.10">
    <property type="entry name" value="YejL-like"/>
    <property type="match status" value="1"/>
</dbReference>
<dbReference type="HAMAP" id="MF_00816">
    <property type="entry name" value="UPF0352"/>
    <property type="match status" value="1"/>
</dbReference>
<dbReference type="InterPro" id="IPR009857">
    <property type="entry name" value="UPF0352"/>
</dbReference>
<dbReference type="InterPro" id="IPR023202">
    <property type="entry name" value="YejL_sf"/>
</dbReference>
<dbReference type="NCBIfam" id="NF010242">
    <property type="entry name" value="PRK13689.1"/>
    <property type="match status" value="1"/>
</dbReference>
<dbReference type="Pfam" id="PF07208">
    <property type="entry name" value="DUF1414"/>
    <property type="match status" value="1"/>
</dbReference>
<dbReference type="PIRSF" id="PIRSF006188">
    <property type="entry name" value="UCP006188"/>
    <property type="match status" value="1"/>
</dbReference>
<dbReference type="SUPFAM" id="SSF158651">
    <property type="entry name" value="YejL-like"/>
    <property type="match status" value="1"/>
</dbReference>
<accession>C0Q0R3</accession>
<sequence>MPQLSRYSDEHVEQLLSELLSVLEKHKAPTDLSLMVLGNMVTNLINTSVAPAQRQAIANSFARALQSSISEDNAH</sequence>